<protein>
    <recommendedName>
        <fullName evidence="2">D-alanine--D-alanine ligase</fullName>
        <ecNumber evidence="2">6.3.2.4</ecNumber>
    </recommendedName>
    <alternativeName>
        <fullName evidence="2">D-Ala-D-Ala ligase</fullName>
    </alternativeName>
    <alternativeName>
        <fullName evidence="2">D-alanylalanine synthetase</fullName>
    </alternativeName>
</protein>
<reference key="1">
    <citation type="journal article" date="2003" name="Proc. Natl. Acad. Sci. U.S.A.">
        <title>Complete genome sequence of the Q-fever pathogen, Coxiella burnetii.</title>
        <authorList>
            <person name="Seshadri R."/>
            <person name="Paulsen I.T."/>
            <person name="Eisen J.A."/>
            <person name="Read T.D."/>
            <person name="Nelson K.E."/>
            <person name="Nelson W.C."/>
            <person name="Ward N.L."/>
            <person name="Tettelin H."/>
            <person name="Davidsen T.M."/>
            <person name="Beanan M.J."/>
            <person name="DeBoy R.T."/>
            <person name="Daugherty S.C."/>
            <person name="Brinkac L.M."/>
            <person name="Madupu R."/>
            <person name="Dodson R.J."/>
            <person name="Khouri H.M."/>
            <person name="Lee K.H."/>
            <person name="Carty H.A."/>
            <person name="Scanlan D."/>
            <person name="Heinzen R.A."/>
            <person name="Thompson H.A."/>
            <person name="Samuel J.E."/>
            <person name="Fraser C.M."/>
            <person name="Heidelberg J.F."/>
        </authorList>
    </citation>
    <scope>NUCLEOTIDE SEQUENCE [LARGE SCALE GENOMIC DNA]</scope>
    <source>
        <strain>RSA 493 / Nine Mile phase I</strain>
    </source>
</reference>
<accession>Q83BZ9</accession>
<comment type="function">
    <text evidence="2">Cell wall formation.</text>
</comment>
<comment type="catalytic activity">
    <reaction evidence="2">
        <text>2 D-alanine + ATP = D-alanyl-D-alanine + ADP + phosphate + H(+)</text>
        <dbReference type="Rhea" id="RHEA:11224"/>
        <dbReference type="ChEBI" id="CHEBI:15378"/>
        <dbReference type="ChEBI" id="CHEBI:30616"/>
        <dbReference type="ChEBI" id="CHEBI:43474"/>
        <dbReference type="ChEBI" id="CHEBI:57416"/>
        <dbReference type="ChEBI" id="CHEBI:57822"/>
        <dbReference type="ChEBI" id="CHEBI:456216"/>
        <dbReference type="EC" id="6.3.2.4"/>
    </reaction>
</comment>
<comment type="cofactor">
    <cofactor evidence="1">
        <name>Mg(2+)</name>
        <dbReference type="ChEBI" id="CHEBI:18420"/>
    </cofactor>
    <cofactor evidence="1">
        <name>Mn(2+)</name>
        <dbReference type="ChEBI" id="CHEBI:29035"/>
    </cofactor>
    <text evidence="1">Binds 2 magnesium or manganese ions per subunit.</text>
</comment>
<comment type="pathway">
    <text evidence="2">Cell wall biogenesis; peptidoglycan biosynthesis.</text>
</comment>
<comment type="subcellular location">
    <subcellularLocation>
        <location evidence="2">Cytoplasm</location>
    </subcellularLocation>
</comment>
<comment type="similarity">
    <text evidence="2">Belongs to the D-alanine--D-alanine ligase family.</text>
</comment>
<comment type="sequence caution" evidence="3">
    <conflict type="erroneous initiation">
        <sequence resource="EMBL-CDS" id="AAO90841"/>
    </conflict>
</comment>
<keyword id="KW-0002">3D-structure</keyword>
<keyword id="KW-0067">ATP-binding</keyword>
<keyword id="KW-0133">Cell shape</keyword>
<keyword id="KW-0961">Cell wall biogenesis/degradation</keyword>
<keyword id="KW-0963">Cytoplasm</keyword>
<keyword id="KW-0436">Ligase</keyword>
<keyword id="KW-0460">Magnesium</keyword>
<keyword id="KW-0464">Manganese</keyword>
<keyword id="KW-0479">Metal-binding</keyword>
<keyword id="KW-0547">Nucleotide-binding</keyword>
<keyword id="KW-0573">Peptidoglycan synthesis</keyword>
<keyword id="KW-1185">Reference proteome</keyword>
<organism>
    <name type="scientific">Coxiella burnetii (strain RSA 493 / Nine Mile phase I)</name>
    <dbReference type="NCBI Taxonomy" id="227377"/>
    <lineage>
        <taxon>Bacteria</taxon>
        <taxon>Pseudomonadati</taxon>
        <taxon>Pseudomonadota</taxon>
        <taxon>Gammaproteobacteria</taxon>
        <taxon>Legionellales</taxon>
        <taxon>Coxiellaceae</taxon>
        <taxon>Coxiella</taxon>
    </lineage>
</organism>
<sequence>MAEKLHISVLCGGQSTEHEISIQSAKNIVNTLDAAKYLISVIFIDHVGRWYLIDQPEMFLAHSPDHLVKEGSARPITIAFGDAAKPWQSLNGDGRRYSADCVFPMVHGTQGEDGALQGLLELLNLPYVGANVQSSAVCMEKDLTKTVLRAGGIPVVDWHTLSPRDATEGVYQRLLDRWGTSELFVKAVSLGSSVATLPVKTETEFTKAVKEVFRYDDRLMVEPRIRGREIECAVLGNGAPKASLPGEIIPHHDYYSYDAKYLDPNGATTTTSVDLSESVTKQIQQIAIDAFKMVHCSGMARVDFFVTPNNKVLVNEINTIPGFTNISMYPKMWEASGLPCPNLLDQLIELAIDRHQEQQKLIRCYEVKARSL</sequence>
<feature type="chain" id="PRO_0000177813" description="D-alanine--D-alanine ligase">
    <location>
        <begin position="1"/>
        <end position="372"/>
    </location>
</feature>
<feature type="domain" description="ATP-grasp" evidence="2">
    <location>
        <begin position="145"/>
        <end position="349"/>
    </location>
</feature>
<feature type="binding site" evidence="2">
    <location>
        <begin position="176"/>
        <end position="231"/>
    </location>
    <ligand>
        <name>ATP</name>
        <dbReference type="ChEBI" id="CHEBI:30616"/>
    </ligand>
</feature>
<feature type="binding site" evidence="2">
    <location>
        <position position="303"/>
    </location>
    <ligand>
        <name>Mg(2+)</name>
        <dbReference type="ChEBI" id="CHEBI:18420"/>
        <label>1</label>
    </ligand>
</feature>
<feature type="binding site" evidence="2">
    <location>
        <position position="316"/>
    </location>
    <ligand>
        <name>Mg(2+)</name>
        <dbReference type="ChEBI" id="CHEBI:18420"/>
        <label>1</label>
    </ligand>
</feature>
<feature type="binding site" evidence="2">
    <location>
        <position position="316"/>
    </location>
    <ligand>
        <name>Mg(2+)</name>
        <dbReference type="ChEBI" id="CHEBI:18420"/>
        <label>2</label>
    </ligand>
</feature>
<feature type="binding site" evidence="2">
    <location>
        <position position="318"/>
    </location>
    <ligand>
        <name>Mg(2+)</name>
        <dbReference type="ChEBI" id="CHEBI:18420"/>
        <label>2</label>
    </ligand>
</feature>
<feature type="strand" evidence="4">
    <location>
        <begin position="4"/>
        <end position="12"/>
    </location>
</feature>
<feature type="helix" evidence="4">
    <location>
        <begin position="18"/>
        <end position="31"/>
    </location>
</feature>
<feature type="turn" evidence="4">
    <location>
        <begin position="34"/>
        <end position="36"/>
    </location>
</feature>
<feature type="strand" evidence="4">
    <location>
        <begin position="37"/>
        <end position="44"/>
    </location>
</feature>
<feature type="strand" evidence="4">
    <location>
        <begin position="50"/>
        <end position="53"/>
    </location>
</feature>
<feature type="helix" evidence="4">
    <location>
        <begin position="56"/>
        <end position="61"/>
    </location>
</feature>
<feature type="helix" evidence="4">
    <location>
        <begin position="64"/>
        <end position="70"/>
    </location>
</feature>
<feature type="strand" evidence="4">
    <location>
        <begin position="73"/>
        <end position="78"/>
    </location>
</feature>
<feature type="strand" evidence="4">
    <location>
        <begin position="87"/>
        <end position="89"/>
    </location>
</feature>
<feature type="strand" evidence="4">
    <location>
        <begin position="100"/>
        <end position="104"/>
    </location>
</feature>
<feature type="turn" evidence="4">
    <location>
        <begin position="109"/>
        <end position="112"/>
    </location>
</feature>
<feature type="helix" evidence="4">
    <location>
        <begin position="115"/>
        <end position="122"/>
    </location>
</feature>
<feature type="strand" evidence="4">
    <location>
        <begin position="127"/>
        <end position="129"/>
    </location>
</feature>
<feature type="helix" evidence="4">
    <location>
        <begin position="132"/>
        <end position="139"/>
    </location>
</feature>
<feature type="helix" evidence="4">
    <location>
        <begin position="141"/>
        <end position="150"/>
    </location>
</feature>
<feature type="strand" evidence="4">
    <location>
        <begin position="159"/>
        <end position="161"/>
    </location>
</feature>
<feature type="helix" evidence="4">
    <location>
        <begin position="170"/>
        <end position="177"/>
    </location>
</feature>
<feature type="strand" evidence="4">
    <location>
        <begin position="183"/>
        <end position="189"/>
    </location>
</feature>
<feature type="helix" evidence="4">
    <location>
        <begin position="193"/>
        <end position="195"/>
    </location>
</feature>
<feature type="strand" evidence="4">
    <location>
        <begin position="196"/>
        <end position="199"/>
    </location>
</feature>
<feature type="helix" evidence="4">
    <location>
        <begin position="202"/>
        <end position="212"/>
    </location>
</feature>
<feature type="turn" evidence="4">
    <location>
        <begin position="213"/>
        <end position="215"/>
    </location>
</feature>
<feature type="strand" evidence="4">
    <location>
        <begin position="219"/>
        <end position="223"/>
    </location>
</feature>
<feature type="strand" evidence="4">
    <location>
        <begin position="227"/>
        <end position="239"/>
    </location>
</feature>
<feature type="strand" evidence="4">
    <location>
        <begin position="246"/>
        <end position="249"/>
    </location>
</feature>
<feature type="strand" evidence="4">
    <location>
        <begin position="268"/>
        <end position="271"/>
    </location>
</feature>
<feature type="helix" evidence="4">
    <location>
        <begin position="277"/>
        <end position="293"/>
    </location>
</feature>
<feature type="strand" evidence="4">
    <location>
        <begin position="298"/>
        <end position="306"/>
    </location>
</feature>
<feature type="strand" evidence="4">
    <location>
        <begin position="312"/>
        <end position="320"/>
    </location>
</feature>
<feature type="helix" evidence="4">
    <location>
        <begin position="328"/>
        <end position="335"/>
    </location>
</feature>
<feature type="helix" evidence="4">
    <location>
        <begin position="340"/>
        <end position="370"/>
    </location>
</feature>
<proteinExistence type="evidence at protein level"/>
<dbReference type="EC" id="6.3.2.4" evidence="2"/>
<dbReference type="EMBL" id="AE016828">
    <property type="protein sequence ID" value="AAO90841.2"/>
    <property type="status" value="ALT_INIT"/>
    <property type="molecule type" value="Genomic_DNA"/>
</dbReference>
<dbReference type="RefSeq" id="NP_820327.2">
    <property type="nucleotide sequence ID" value="NC_002971.3"/>
</dbReference>
<dbReference type="PDB" id="3TQT">
    <property type="method" value="X-ray"/>
    <property type="resolution" value="1.88 A"/>
    <property type="chains" value="A/B=1-372"/>
</dbReference>
<dbReference type="PDBsum" id="3TQT"/>
<dbReference type="SMR" id="Q83BZ9"/>
<dbReference type="STRING" id="227377.CBU_1338"/>
<dbReference type="EnsemblBacteria" id="AAO90841">
    <property type="protein sequence ID" value="AAO90841"/>
    <property type="gene ID" value="CBU_1338"/>
</dbReference>
<dbReference type="GeneID" id="1209244"/>
<dbReference type="KEGG" id="cbu:CBU_1338"/>
<dbReference type="PATRIC" id="fig|227377.7.peg.1330"/>
<dbReference type="eggNOG" id="COG1181">
    <property type="taxonomic scope" value="Bacteria"/>
</dbReference>
<dbReference type="HOGENOM" id="CLU_039268_0_0_6"/>
<dbReference type="OrthoDB" id="9813261at2"/>
<dbReference type="UniPathway" id="UPA00219"/>
<dbReference type="EvolutionaryTrace" id="Q83BZ9"/>
<dbReference type="Proteomes" id="UP000002671">
    <property type="component" value="Chromosome"/>
</dbReference>
<dbReference type="GO" id="GO:0005829">
    <property type="term" value="C:cytosol"/>
    <property type="evidence" value="ECO:0000318"/>
    <property type="project" value="GO_Central"/>
</dbReference>
<dbReference type="GO" id="GO:0005524">
    <property type="term" value="F:ATP binding"/>
    <property type="evidence" value="ECO:0007669"/>
    <property type="project" value="UniProtKB-KW"/>
</dbReference>
<dbReference type="GO" id="GO:0008716">
    <property type="term" value="F:D-alanine-D-alanine ligase activity"/>
    <property type="evidence" value="ECO:0000318"/>
    <property type="project" value="GO_Central"/>
</dbReference>
<dbReference type="GO" id="GO:0046872">
    <property type="term" value="F:metal ion binding"/>
    <property type="evidence" value="ECO:0007669"/>
    <property type="project" value="UniProtKB-KW"/>
</dbReference>
<dbReference type="GO" id="GO:0071555">
    <property type="term" value="P:cell wall organization"/>
    <property type="evidence" value="ECO:0007669"/>
    <property type="project" value="UniProtKB-KW"/>
</dbReference>
<dbReference type="GO" id="GO:0009252">
    <property type="term" value="P:peptidoglycan biosynthetic process"/>
    <property type="evidence" value="ECO:0000318"/>
    <property type="project" value="GO_Central"/>
</dbReference>
<dbReference type="GO" id="GO:0008360">
    <property type="term" value="P:regulation of cell shape"/>
    <property type="evidence" value="ECO:0007669"/>
    <property type="project" value="UniProtKB-KW"/>
</dbReference>
<dbReference type="FunFam" id="3.30.470.20:FF:000008">
    <property type="entry name" value="D-alanine--D-alanine ligase"/>
    <property type="match status" value="1"/>
</dbReference>
<dbReference type="Gene3D" id="3.40.50.20">
    <property type="match status" value="1"/>
</dbReference>
<dbReference type="Gene3D" id="3.30.1490.20">
    <property type="entry name" value="ATP-grasp fold, A domain"/>
    <property type="match status" value="1"/>
</dbReference>
<dbReference type="Gene3D" id="3.30.470.20">
    <property type="entry name" value="ATP-grasp fold, B domain"/>
    <property type="match status" value="1"/>
</dbReference>
<dbReference type="HAMAP" id="MF_00047">
    <property type="entry name" value="Dala_Dala_lig"/>
    <property type="match status" value="1"/>
</dbReference>
<dbReference type="InterPro" id="IPR011761">
    <property type="entry name" value="ATP-grasp"/>
</dbReference>
<dbReference type="InterPro" id="IPR013815">
    <property type="entry name" value="ATP_grasp_subdomain_1"/>
</dbReference>
<dbReference type="InterPro" id="IPR000291">
    <property type="entry name" value="D-Ala_lig_Van_CS"/>
</dbReference>
<dbReference type="InterPro" id="IPR005905">
    <property type="entry name" value="D_ala_D_ala"/>
</dbReference>
<dbReference type="InterPro" id="IPR011095">
    <property type="entry name" value="Dala_Dala_lig_C"/>
</dbReference>
<dbReference type="InterPro" id="IPR011127">
    <property type="entry name" value="Dala_Dala_lig_N"/>
</dbReference>
<dbReference type="InterPro" id="IPR016185">
    <property type="entry name" value="PreATP-grasp_dom_sf"/>
</dbReference>
<dbReference type="NCBIfam" id="TIGR01205">
    <property type="entry name" value="D_ala_D_alaTIGR"/>
    <property type="match status" value="1"/>
</dbReference>
<dbReference type="NCBIfam" id="NF002528">
    <property type="entry name" value="PRK01966.1-4"/>
    <property type="match status" value="1"/>
</dbReference>
<dbReference type="PANTHER" id="PTHR23132">
    <property type="entry name" value="D-ALANINE--D-ALANINE LIGASE"/>
    <property type="match status" value="1"/>
</dbReference>
<dbReference type="PANTHER" id="PTHR23132:SF25">
    <property type="entry name" value="D-ALANINE--D-ALANINE LIGASE A"/>
    <property type="match status" value="1"/>
</dbReference>
<dbReference type="Pfam" id="PF07478">
    <property type="entry name" value="Dala_Dala_lig_C"/>
    <property type="match status" value="1"/>
</dbReference>
<dbReference type="Pfam" id="PF01820">
    <property type="entry name" value="Dala_Dala_lig_N"/>
    <property type="match status" value="1"/>
</dbReference>
<dbReference type="PIRSF" id="PIRSF039102">
    <property type="entry name" value="Ddl/VanB"/>
    <property type="match status" value="1"/>
</dbReference>
<dbReference type="SUPFAM" id="SSF56059">
    <property type="entry name" value="Glutathione synthetase ATP-binding domain-like"/>
    <property type="match status" value="1"/>
</dbReference>
<dbReference type="SUPFAM" id="SSF52440">
    <property type="entry name" value="PreATP-grasp domain"/>
    <property type="match status" value="1"/>
</dbReference>
<dbReference type="PROSITE" id="PS50975">
    <property type="entry name" value="ATP_GRASP"/>
    <property type="match status" value="1"/>
</dbReference>
<dbReference type="PROSITE" id="PS00843">
    <property type="entry name" value="DALA_DALA_LIGASE_1"/>
    <property type="match status" value="1"/>
</dbReference>
<dbReference type="PROSITE" id="PS00844">
    <property type="entry name" value="DALA_DALA_LIGASE_2"/>
    <property type="match status" value="1"/>
</dbReference>
<name>DDL_COXBU</name>
<evidence type="ECO:0000250" key="1"/>
<evidence type="ECO:0000255" key="2">
    <source>
        <dbReference type="HAMAP-Rule" id="MF_00047"/>
    </source>
</evidence>
<evidence type="ECO:0000305" key="3"/>
<evidence type="ECO:0007829" key="4">
    <source>
        <dbReference type="PDB" id="3TQT"/>
    </source>
</evidence>
<gene>
    <name evidence="2" type="primary">ddl</name>
    <name type="ordered locus">CBU_1338</name>
</gene>